<keyword id="KW-0687">Ribonucleoprotein</keyword>
<keyword id="KW-0689">Ribosomal protein</keyword>
<keyword id="KW-0694">RNA-binding</keyword>
<keyword id="KW-0699">rRNA-binding</keyword>
<proteinExistence type="inferred from homology"/>
<gene>
    <name evidence="1" type="primary">rpsH</name>
    <name type="ordered locus">KPK_0412</name>
</gene>
<feature type="chain" id="PRO_1000140568" description="Small ribosomal subunit protein uS8">
    <location>
        <begin position="1"/>
        <end position="130"/>
    </location>
</feature>
<reference key="1">
    <citation type="journal article" date="2008" name="PLoS Genet.">
        <title>Complete genome sequence of the N2-fixing broad host range endophyte Klebsiella pneumoniae 342 and virulence predictions verified in mice.</title>
        <authorList>
            <person name="Fouts D.E."/>
            <person name="Tyler H.L."/>
            <person name="DeBoy R.T."/>
            <person name="Daugherty S."/>
            <person name="Ren Q."/>
            <person name="Badger J.H."/>
            <person name="Durkin A.S."/>
            <person name="Huot H."/>
            <person name="Shrivastava S."/>
            <person name="Kothari S."/>
            <person name="Dodson R.J."/>
            <person name="Mohamoud Y."/>
            <person name="Khouri H."/>
            <person name="Roesch L.F.W."/>
            <person name="Krogfelt K.A."/>
            <person name="Struve C."/>
            <person name="Triplett E.W."/>
            <person name="Methe B.A."/>
        </authorList>
    </citation>
    <scope>NUCLEOTIDE SEQUENCE [LARGE SCALE GENOMIC DNA]</scope>
    <source>
        <strain>342</strain>
    </source>
</reference>
<protein>
    <recommendedName>
        <fullName evidence="1">Small ribosomal subunit protein uS8</fullName>
    </recommendedName>
    <alternativeName>
        <fullName evidence="2">30S ribosomal protein S8</fullName>
    </alternativeName>
</protein>
<sequence length="130" mass="14139">MSMQDPIADMLTRIRNGQAANKAAVTMPSSKLKVAIANVLKEEGFIEDFKVEGDIKPELELTLKYFQGKAVVESIQRVSRPGLRIYKRKDELPKVMAGLGIAVVSTSKGVMTDRAARQAGLGGEIICYVA</sequence>
<name>RS8_KLEP3</name>
<comment type="function">
    <text evidence="1">One of the primary rRNA binding proteins, it binds directly to 16S rRNA central domain where it helps coordinate assembly of the platform of the 30S subunit.</text>
</comment>
<comment type="subunit">
    <text evidence="1">Part of the 30S ribosomal subunit. Contacts proteins S5 and S12.</text>
</comment>
<comment type="similarity">
    <text evidence="1">Belongs to the universal ribosomal protein uS8 family.</text>
</comment>
<dbReference type="EMBL" id="CP000964">
    <property type="protein sequence ID" value="ACI11511.1"/>
    <property type="molecule type" value="Genomic_DNA"/>
</dbReference>
<dbReference type="SMR" id="B5XNA7"/>
<dbReference type="KEGG" id="kpe:KPK_0412"/>
<dbReference type="HOGENOM" id="CLU_098428_0_0_6"/>
<dbReference type="Proteomes" id="UP000001734">
    <property type="component" value="Chromosome"/>
</dbReference>
<dbReference type="GO" id="GO:1990904">
    <property type="term" value="C:ribonucleoprotein complex"/>
    <property type="evidence" value="ECO:0007669"/>
    <property type="project" value="UniProtKB-KW"/>
</dbReference>
<dbReference type="GO" id="GO:0005840">
    <property type="term" value="C:ribosome"/>
    <property type="evidence" value="ECO:0007669"/>
    <property type="project" value="UniProtKB-KW"/>
</dbReference>
<dbReference type="GO" id="GO:0019843">
    <property type="term" value="F:rRNA binding"/>
    <property type="evidence" value="ECO:0007669"/>
    <property type="project" value="UniProtKB-UniRule"/>
</dbReference>
<dbReference type="GO" id="GO:0003735">
    <property type="term" value="F:structural constituent of ribosome"/>
    <property type="evidence" value="ECO:0007669"/>
    <property type="project" value="InterPro"/>
</dbReference>
<dbReference type="GO" id="GO:0006412">
    <property type="term" value="P:translation"/>
    <property type="evidence" value="ECO:0007669"/>
    <property type="project" value="UniProtKB-UniRule"/>
</dbReference>
<dbReference type="FunFam" id="3.30.1370.30:FF:000003">
    <property type="entry name" value="30S ribosomal protein S8"/>
    <property type="match status" value="1"/>
</dbReference>
<dbReference type="FunFam" id="3.30.1490.10:FF:000001">
    <property type="entry name" value="30S ribosomal protein S8"/>
    <property type="match status" value="1"/>
</dbReference>
<dbReference type="Gene3D" id="3.30.1370.30">
    <property type="match status" value="1"/>
</dbReference>
<dbReference type="Gene3D" id="3.30.1490.10">
    <property type="match status" value="1"/>
</dbReference>
<dbReference type="HAMAP" id="MF_01302_B">
    <property type="entry name" value="Ribosomal_uS8_B"/>
    <property type="match status" value="1"/>
</dbReference>
<dbReference type="InterPro" id="IPR000630">
    <property type="entry name" value="Ribosomal_uS8"/>
</dbReference>
<dbReference type="InterPro" id="IPR047863">
    <property type="entry name" value="Ribosomal_uS8_CS"/>
</dbReference>
<dbReference type="InterPro" id="IPR035987">
    <property type="entry name" value="Ribosomal_uS8_sf"/>
</dbReference>
<dbReference type="NCBIfam" id="NF001109">
    <property type="entry name" value="PRK00136.1"/>
    <property type="match status" value="1"/>
</dbReference>
<dbReference type="PANTHER" id="PTHR11758">
    <property type="entry name" value="40S RIBOSOMAL PROTEIN S15A"/>
    <property type="match status" value="1"/>
</dbReference>
<dbReference type="Pfam" id="PF00410">
    <property type="entry name" value="Ribosomal_S8"/>
    <property type="match status" value="1"/>
</dbReference>
<dbReference type="SUPFAM" id="SSF56047">
    <property type="entry name" value="Ribosomal protein S8"/>
    <property type="match status" value="1"/>
</dbReference>
<dbReference type="PROSITE" id="PS00053">
    <property type="entry name" value="RIBOSOMAL_S8"/>
    <property type="match status" value="1"/>
</dbReference>
<evidence type="ECO:0000255" key="1">
    <source>
        <dbReference type="HAMAP-Rule" id="MF_01302"/>
    </source>
</evidence>
<evidence type="ECO:0000305" key="2"/>
<accession>B5XNA7</accession>
<organism>
    <name type="scientific">Klebsiella pneumoniae (strain 342)</name>
    <dbReference type="NCBI Taxonomy" id="507522"/>
    <lineage>
        <taxon>Bacteria</taxon>
        <taxon>Pseudomonadati</taxon>
        <taxon>Pseudomonadota</taxon>
        <taxon>Gammaproteobacteria</taxon>
        <taxon>Enterobacterales</taxon>
        <taxon>Enterobacteriaceae</taxon>
        <taxon>Klebsiella/Raoultella group</taxon>
        <taxon>Klebsiella</taxon>
        <taxon>Klebsiella pneumoniae complex</taxon>
    </lineage>
</organism>